<comment type="function">
    <text evidence="2">Acts as a negative regulator of autophagy, through promoting ubiquitination and degradation of LRSAM1, an E3 ubiquitin ligase that promotes autophagy in response to starvation or infecting bacteria.</text>
</comment>
<comment type="subunit">
    <text evidence="2">Interacts with LRSAM1.</text>
</comment>
<comment type="subcellular location">
    <subcellularLocation>
        <location evidence="2">Nucleus</location>
    </subcellularLocation>
    <subcellularLocation>
        <location evidence="2">Cytoplasm</location>
    </subcellularLocation>
    <text evidence="2">Mainly present in the nucleus and part in the cytoplasm.</text>
</comment>
<comment type="domain">
    <text evidence="2">The PHD-type zinc-finger domain is required for interaction with LRSAM1 and negative regulation of autophagy.</text>
</comment>
<comment type="similarity">
    <text evidence="4">Belongs to the PHF23 family.</text>
</comment>
<gene>
    <name evidence="2" type="primary">Phf23</name>
</gene>
<dbReference type="EMBL" id="BC079162">
    <property type="protein sequence ID" value="AAH79162.1"/>
    <property type="molecule type" value="mRNA"/>
</dbReference>
<dbReference type="RefSeq" id="NP_001004272.1">
    <property type="nucleotide sequence ID" value="NM_001004272.2"/>
</dbReference>
<dbReference type="SMR" id="Q6AY75"/>
<dbReference type="FunCoup" id="Q6AY75">
    <property type="interactions" value="1891"/>
</dbReference>
<dbReference type="STRING" id="10116.ENSRNOP00000024079"/>
<dbReference type="GlyGen" id="Q6AY75">
    <property type="glycosylation" value="1 site"/>
</dbReference>
<dbReference type="PhosphoSitePlus" id="Q6AY75"/>
<dbReference type="PaxDb" id="10116-ENSRNOP00000024079"/>
<dbReference type="GeneID" id="360550"/>
<dbReference type="KEGG" id="rno:360550"/>
<dbReference type="UCSC" id="RGD:1302969">
    <property type="organism name" value="rat"/>
</dbReference>
<dbReference type="AGR" id="RGD:1302969"/>
<dbReference type="CTD" id="79142"/>
<dbReference type="RGD" id="1302969">
    <property type="gene designation" value="Phf23"/>
</dbReference>
<dbReference type="VEuPathDB" id="HostDB:ENSRNOG00000017657"/>
<dbReference type="eggNOG" id="KOG1844">
    <property type="taxonomic scope" value="Eukaryota"/>
</dbReference>
<dbReference type="HOGENOM" id="CLU_047981_1_1_1"/>
<dbReference type="InParanoid" id="Q6AY75"/>
<dbReference type="PRO" id="PR:Q6AY75"/>
<dbReference type="Proteomes" id="UP000002494">
    <property type="component" value="Chromosome 10"/>
</dbReference>
<dbReference type="Bgee" id="ENSRNOG00000017657">
    <property type="expression patterns" value="Expressed in thymus and 20 other cell types or tissues"/>
</dbReference>
<dbReference type="GO" id="GO:0005737">
    <property type="term" value="C:cytoplasm"/>
    <property type="evidence" value="ECO:0007669"/>
    <property type="project" value="UniProtKB-SubCell"/>
</dbReference>
<dbReference type="GO" id="GO:0005634">
    <property type="term" value="C:nucleus"/>
    <property type="evidence" value="ECO:0000318"/>
    <property type="project" value="GO_Central"/>
</dbReference>
<dbReference type="GO" id="GO:0008270">
    <property type="term" value="F:zinc ion binding"/>
    <property type="evidence" value="ECO:0007669"/>
    <property type="project" value="UniProtKB-KW"/>
</dbReference>
<dbReference type="GO" id="GO:0006914">
    <property type="term" value="P:autophagy"/>
    <property type="evidence" value="ECO:0007669"/>
    <property type="project" value="UniProtKB-KW"/>
</dbReference>
<dbReference type="GO" id="GO:1902902">
    <property type="term" value="P:negative regulation of autophagosome assembly"/>
    <property type="evidence" value="ECO:0000250"/>
    <property type="project" value="GO_Central"/>
</dbReference>
<dbReference type="GO" id="GO:1901097">
    <property type="term" value="P:negative regulation of autophagosome maturation"/>
    <property type="evidence" value="ECO:0000250"/>
    <property type="project" value="GO_Central"/>
</dbReference>
<dbReference type="GO" id="GO:0031398">
    <property type="term" value="P:positive regulation of protein ubiquitination"/>
    <property type="evidence" value="ECO:0000250"/>
    <property type="project" value="GO_Central"/>
</dbReference>
<dbReference type="CDD" id="cd15631">
    <property type="entry name" value="PHD_PHF23"/>
    <property type="match status" value="1"/>
</dbReference>
<dbReference type="Gene3D" id="3.30.40.10">
    <property type="entry name" value="Zinc/RING finger domain, C3HC4 (zinc finger)"/>
    <property type="match status" value="1"/>
</dbReference>
<dbReference type="InterPro" id="IPR011011">
    <property type="entry name" value="Znf_FYVE_PHD"/>
</dbReference>
<dbReference type="InterPro" id="IPR001965">
    <property type="entry name" value="Znf_PHD"/>
</dbReference>
<dbReference type="InterPro" id="IPR019787">
    <property type="entry name" value="Znf_PHD-finger"/>
</dbReference>
<dbReference type="InterPro" id="IPR013083">
    <property type="entry name" value="Znf_RING/FYVE/PHD"/>
</dbReference>
<dbReference type="PANTHER" id="PTHR14571">
    <property type="entry name" value="HISTONE-LYSINE N-METHYLTRANSFERASE SET-26-RELATED"/>
    <property type="match status" value="1"/>
</dbReference>
<dbReference type="PANTHER" id="PTHR14571:SF8">
    <property type="entry name" value="PHD FINGER PROTEIN 23"/>
    <property type="match status" value="1"/>
</dbReference>
<dbReference type="Pfam" id="PF13831">
    <property type="entry name" value="PHD_2"/>
    <property type="match status" value="1"/>
</dbReference>
<dbReference type="SMART" id="SM00249">
    <property type="entry name" value="PHD"/>
    <property type="match status" value="1"/>
</dbReference>
<dbReference type="SUPFAM" id="SSF57903">
    <property type="entry name" value="FYVE/PHD zinc finger"/>
    <property type="match status" value="1"/>
</dbReference>
<sequence>MLEAMAEPSPEDPPPTLKPETQPPEKRRRTIEDFNKFCSFVLAYAGYIPPSKGAPDSATLLEKMKLKDSLFDLDGPKVASPLSPTSLTSRPPAALTPVPLSQGDLSQPRKKDRKNRKLGPGGGAGFGVLRRPRPAPGDGEKRSRIKKSKKRKLKKADRGDRLPPPGPPRAPPSDTDSEEEEEEEEEEDDEEETTVVGGGGVPAPVLPTPPEAPRPPVTVHPEGAPPTDSEGKDAGSTETSQDGDGSSSEGEMRVMDEDIMVESGDDSWDLITCYCRKPFAGRPMIECSLCGTWIHLSCAKIKKTNVPDFFYCQKCKELRPEARRLGGLPKSGEP</sequence>
<protein>
    <recommendedName>
        <fullName evidence="2">PHD finger protein 23</fullName>
    </recommendedName>
    <alternativeName>
        <fullName evidence="1">PDH-containing protein JUNE-1</fullName>
    </alternativeName>
</protein>
<feature type="chain" id="PRO_0000302832" description="PHD finger protein 23">
    <location>
        <begin position="1"/>
        <end position="334"/>
    </location>
</feature>
<feature type="zinc finger region" description="PHD-type">
    <location>
        <begin position="270"/>
        <end position="318"/>
    </location>
</feature>
<feature type="region of interest" description="Disordered" evidence="3">
    <location>
        <begin position="1"/>
        <end position="30"/>
    </location>
</feature>
<feature type="region of interest" description="Disordered" evidence="3">
    <location>
        <begin position="72"/>
        <end position="251"/>
    </location>
</feature>
<feature type="compositionally biased region" description="Low complexity" evidence="3">
    <location>
        <begin position="80"/>
        <end position="92"/>
    </location>
</feature>
<feature type="compositionally biased region" description="Basic residues" evidence="3">
    <location>
        <begin position="108"/>
        <end position="117"/>
    </location>
</feature>
<feature type="compositionally biased region" description="Basic residues" evidence="3">
    <location>
        <begin position="143"/>
        <end position="155"/>
    </location>
</feature>
<feature type="compositionally biased region" description="Pro residues" evidence="3">
    <location>
        <begin position="162"/>
        <end position="171"/>
    </location>
</feature>
<feature type="compositionally biased region" description="Acidic residues" evidence="3">
    <location>
        <begin position="175"/>
        <end position="193"/>
    </location>
</feature>
<feature type="compositionally biased region" description="Pro residues" evidence="3">
    <location>
        <begin position="204"/>
        <end position="218"/>
    </location>
</feature>
<feature type="compositionally biased region" description="Low complexity" evidence="3">
    <location>
        <begin position="236"/>
        <end position="249"/>
    </location>
</feature>
<feature type="modified residue" description="N-acetylmethionine" evidence="2">
    <location>
        <position position="1"/>
    </location>
</feature>
<feature type="modified residue" description="Phosphoserine" evidence="2">
    <location>
        <position position="57"/>
    </location>
</feature>
<feature type="modified residue" description="Phosphoserine" evidence="2">
    <location>
        <position position="80"/>
    </location>
</feature>
<feature type="modified residue" description="Phosphoserine" evidence="2">
    <location>
        <position position="83"/>
    </location>
</feature>
<feature type="modified residue" description="Phosphothreonine" evidence="2">
    <location>
        <position position="96"/>
    </location>
</feature>
<feature type="modified residue" description="Phosphoserine" evidence="2">
    <location>
        <position position="246"/>
    </location>
</feature>
<feature type="modified residue" description="Phosphoserine" evidence="2">
    <location>
        <position position="247"/>
    </location>
</feature>
<feature type="modified residue" description="Phosphoserine" evidence="2">
    <location>
        <position position="248"/>
    </location>
</feature>
<feature type="modified residue" description="Phosphoserine" evidence="2">
    <location>
        <position position="331"/>
    </location>
</feature>
<name>PHF23_RAT</name>
<evidence type="ECO:0000250" key="1">
    <source>
        <dbReference type="UniProtKB" id="Q8BSN5"/>
    </source>
</evidence>
<evidence type="ECO:0000250" key="2">
    <source>
        <dbReference type="UniProtKB" id="Q9BUL5"/>
    </source>
</evidence>
<evidence type="ECO:0000256" key="3">
    <source>
        <dbReference type="SAM" id="MobiDB-lite"/>
    </source>
</evidence>
<evidence type="ECO:0000305" key="4"/>
<accession>Q6AY75</accession>
<organism>
    <name type="scientific">Rattus norvegicus</name>
    <name type="common">Rat</name>
    <dbReference type="NCBI Taxonomy" id="10116"/>
    <lineage>
        <taxon>Eukaryota</taxon>
        <taxon>Metazoa</taxon>
        <taxon>Chordata</taxon>
        <taxon>Craniata</taxon>
        <taxon>Vertebrata</taxon>
        <taxon>Euteleostomi</taxon>
        <taxon>Mammalia</taxon>
        <taxon>Eutheria</taxon>
        <taxon>Euarchontoglires</taxon>
        <taxon>Glires</taxon>
        <taxon>Rodentia</taxon>
        <taxon>Myomorpha</taxon>
        <taxon>Muroidea</taxon>
        <taxon>Muridae</taxon>
        <taxon>Murinae</taxon>
        <taxon>Rattus</taxon>
    </lineage>
</organism>
<reference key="1">
    <citation type="journal article" date="2004" name="Genome Res.">
        <title>The status, quality, and expansion of the NIH full-length cDNA project: the Mammalian Gene Collection (MGC).</title>
        <authorList>
            <consortium name="The MGC Project Team"/>
        </authorList>
    </citation>
    <scope>NUCLEOTIDE SEQUENCE [LARGE SCALE MRNA]</scope>
    <source>
        <tissue>Kidney</tissue>
    </source>
</reference>
<keyword id="KW-0007">Acetylation</keyword>
<keyword id="KW-0072">Autophagy</keyword>
<keyword id="KW-0963">Cytoplasm</keyword>
<keyword id="KW-0479">Metal-binding</keyword>
<keyword id="KW-0539">Nucleus</keyword>
<keyword id="KW-0597">Phosphoprotein</keyword>
<keyword id="KW-1185">Reference proteome</keyword>
<keyword id="KW-0833">Ubl conjugation pathway</keyword>
<keyword id="KW-0862">Zinc</keyword>
<keyword id="KW-0863">Zinc-finger</keyword>
<proteinExistence type="evidence at transcript level"/>